<sequence>MNEYNFSDIEKSTQEYWRKNDTFKTIEDNTKEKFYCLSMLPYPSGTLHMGHVRNYTIGDVIARYQKMQGKNVLHPMGWDAFGLPAENAAIKHKKSPYEWTKSNIAYMRSQFDSLGFSFDWSREITTCDEDYYKWEQWFFIQLYKKGLAYRKNSVVNWDPVDQTVLANEQVVDGRGWRSGALVEKKEIPQWFLKITDYADELLQDINKLDNWPEAVKTMQINWIGKSKGLTVKFKVKDSNQEIEVFTTRPDTLMGVNYLGIAPEHPLALKEAKSNSQLAAFIEECKKTSTMEADLATQEKKGFKTSIKVIHPISAETIDVWVANFVLMGYGSGAVMSVPAHDQRDWEFAQKYNIPLKQVIESNDNKLKIDLEKQAFTEKGILINSGEFDGLNFKNAYQAIKKYLTEQNKGYETTNFRIHDWGISRQRYWGCPIPMIHCDDCGAVPEKEENLPVRLPTDVALTEAGSPLKDIPEFINVACPECGKPAKRETDTFDTFFESSWYYARYTCPTANQMLDQEANYWLPVDKYIGGIEHAIMHLLYARFFHKLMRDQGLVKSDEPFKNLLTQGMVLKDGAKMSKSKGNIVDPQELIDKYGADTVRLFSMFAAPPEQSLEWSETGVEGANKFLRKVFNYAELNKVIFAKNITLESQKLTKEDKKARFEIHSNLKQAIFDFDKSQFNTVVSACMKILNTLNNYDNLSESVKVEGFSILLRILAPFTPHLCHYLWQQLNLGEDILHTSFPTVDNNALEKDEFLLVVQINGKLKAKLELDASLSSNQVEEVVLADEHVKSFIDNKQVVKVIYVPQKLINIVIK</sequence>
<protein>
    <recommendedName>
        <fullName evidence="1">Leucine--tRNA ligase</fullName>
        <ecNumber evidence="1">6.1.1.4</ecNumber>
    </recommendedName>
    <alternativeName>
        <fullName evidence="1">Leucyl-tRNA synthetase</fullName>
        <shortName evidence="1">LeuRS</shortName>
    </alternativeName>
</protein>
<gene>
    <name evidence="1" type="primary">leuS</name>
    <name type="ordered locus">FTT_0990</name>
</gene>
<evidence type="ECO:0000255" key="1">
    <source>
        <dbReference type="HAMAP-Rule" id="MF_00049"/>
    </source>
</evidence>
<reference key="1">
    <citation type="journal article" date="2005" name="Nat. Genet.">
        <title>The complete genome sequence of Francisella tularensis, the causative agent of tularemia.</title>
        <authorList>
            <person name="Larsson P."/>
            <person name="Oyston P.C.F."/>
            <person name="Chain P."/>
            <person name="Chu M.C."/>
            <person name="Duffield M."/>
            <person name="Fuxelius H.-H."/>
            <person name="Garcia E."/>
            <person name="Haelltorp G."/>
            <person name="Johansson D."/>
            <person name="Isherwood K.E."/>
            <person name="Karp P.D."/>
            <person name="Larsson E."/>
            <person name="Liu Y."/>
            <person name="Michell S."/>
            <person name="Prior J."/>
            <person name="Prior R."/>
            <person name="Malfatti S."/>
            <person name="Sjoestedt A."/>
            <person name="Svensson K."/>
            <person name="Thompson N."/>
            <person name="Vergez L."/>
            <person name="Wagg J.K."/>
            <person name="Wren B.W."/>
            <person name="Lindler L.E."/>
            <person name="Andersson S.G.E."/>
            <person name="Forsman M."/>
            <person name="Titball R.W."/>
        </authorList>
    </citation>
    <scope>NUCLEOTIDE SEQUENCE [LARGE SCALE GENOMIC DNA]</scope>
    <source>
        <strain>SCHU S4 / Schu 4</strain>
    </source>
</reference>
<accession>Q5NG64</accession>
<feature type="chain" id="PRO_0000152017" description="Leucine--tRNA ligase">
    <location>
        <begin position="1"/>
        <end position="813"/>
    </location>
</feature>
<feature type="short sequence motif" description="'HIGH' region">
    <location>
        <begin position="41"/>
        <end position="51"/>
    </location>
</feature>
<feature type="short sequence motif" description="'KMSKS' region">
    <location>
        <begin position="575"/>
        <end position="579"/>
    </location>
</feature>
<feature type="binding site" evidence="1">
    <location>
        <position position="578"/>
    </location>
    <ligand>
        <name>ATP</name>
        <dbReference type="ChEBI" id="CHEBI:30616"/>
    </ligand>
</feature>
<proteinExistence type="inferred from homology"/>
<dbReference type="EC" id="6.1.1.4" evidence="1"/>
<dbReference type="EMBL" id="AJ749949">
    <property type="protein sequence ID" value="CAG45623.1"/>
    <property type="molecule type" value="Genomic_DNA"/>
</dbReference>
<dbReference type="RefSeq" id="WP_003021076.1">
    <property type="nucleotide sequence ID" value="NC_006570.2"/>
</dbReference>
<dbReference type="RefSeq" id="YP_169978.1">
    <property type="nucleotide sequence ID" value="NC_006570.2"/>
</dbReference>
<dbReference type="SMR" id="Q5NG64"/>
<dbReference type="STRING" id="177416.FTT_0990"/>
<dbReference type="DNASU" id="3190983"/>
<dbReference type="EnsemblBacteria" id="CAG45623">
    <property type="protein sequence ID" value="CAG45623"/>
    <property type="gene ID" value="FTT_0990"/>
</dbReference>
<dbReference type="KEGG" id="ftu:FTT_0990"/>
<dbReference type="eggNOG" id="COG0495">
    <property type="taxonomic scope" value="Bacteria"/>
</dbReference>
<dbReference type="OrthoDB" id="9810365at2"/>
<dbReference type="Proteomes" id="UP000001174">
    <property type="component" value="Chromosome"/>
</dbReference>
<dbReference type="GO" id="GO:0005829">
    <property type="term" value="C:cytosol"/>
    <property type="evidence" value="ECO:0007669"/>
    <property type="project" value="TreeGrafter"/>
</dbReference>
<dbReference type="GO" id="GO:0002161">
    <property type="term" value="F:aminoacyl-tRNA deacylase activity"/>
    <property type="evidence" value="ECO:0007669"/>
    <property type="project" value="InterPro"/>
</dbReference>
<dbReference type="GO" id="GO:0005524">
    <property type="term" value="F:ATP binding"/>
    <property type="evidence" value="ECO:0007669"/>
    <property type="project" value="UniProtKB-UniRule"/>
</dbReference>
<dbReference type="GO" id="GO:0004823">
    <property type="term" value="F:leucine-tRNA ligase activity"/>
    <property type="evidence" value="ECO:0007669"/>
    <property type="project" value="UniProtKB-UniRule"/>
</dbReference>
<dbReference type="GO" id="GO:0006429">
    <property type="term" value="P:leucyl-tRNA aminoacylation"/>
    <property type="evidence" value="ECO:0007669"/>
    <property type="project" value="UniProtKB-UniRule"/>
</dbReference>
<dbReference type="CDD" id="cd07958">
    <property type="entry name" value="Anticodon_Ia_Leu_BEm"/>
    <property type="match status" value="1"/>
</dbReference>
<dbReference type="CDD" id="cd00812">
    <property type="entry name" value="LeuRS_core"/>
    <property type="match status" value="1"/>
</dbReference>
<dbReference type="FunFam" id="1.10.730.10:FF:000002">
    <property type="entry name" value="Leucine--tRNA ligase"/>
    <property type="match status" value="1"/>
</dbReference>
<dbReference type="FunFam" id="3.10.20.590:FF:000001">
    <property type="entry name" value="Leucine--tRNA ligase"/>
    <property type="match status" value="1"/>
</dbReference>
<dbReference type="FunFam" id="3.40.50.620:FF:000056">
    <property type="entry name" value="Leucine--tRNA ligase"/>
    <property type="match status" value="1"/>
</dbReference>
<dbReference type="FunFam" id="3.40.50.620:FF:000395">
    <property type="entry name" value="Leucine--tRNA ligase"/>
    <property type="match status" value="1"/>
</dbReference>
<dbReference type="FunFam" id="3.90.740.10:FF:000012">
    <property type="entry name" value="Leucine--tRNA ligase"/>
    <property type="match status" value="1"/>
</dbReference>
<dbReference type="Gene3D" id="3.10.20.590">
    <property type="match status" value="1"/>
</dbReference>
<dbReference type="Gene3D" id="3.40.50.620">
    <property type="entry name" value="HUPs"/>
    <property type="match status" value="2"/>
</dbReference>
<dbReference type="Gene3D" id="1.10.730.10">
    <property type="entry name" value="Isoleucyl-tRNA Synthetase, Domain 1"/>
    <property type="match status" value="1"/>
</dbReference>
<dbReference type="HAMAP" id="MF_00049_B">
    <property type="entry name" value="Leu_tRNA_synth_B"/>
    <property type="match status" value="1"/>
</dbReference>
<dbReference type="InterPro" id="IPR001412">
    <property type="entry name" value="aa-tRNA-synth_I_CS"/>
</dbReference>
<dbReference type="InterPro" id="IPR002300">
    <property type="entry name" value="aa-tRNA-synth_Ia"/>
</dbReference>
<dbReference type="InterPro" id="IPR002302">
    <property type="entry name" value="Leu-tRNA-ligase"/>
</dbReference>
<dbReference type="InterPro" id="IPR025709">
    <property type="entry name" value="Leu_tRNA-synth_edit"/>
</dbReference>
<dbReference type="InterPro" id="IPR013155">
    <property type="entry name" value="M/V/L/I-tRNA-synth_anticd-bd"/>
</dbReference>
<dbReference type="InterPro" id="IPR015413">
    <property type="entry name" value="Methionyl/Leucyl_tRNA_Synth"/>
</dbReference>
<dbReference type="InterPro" id="IPR014729">
    <property type="entry name" value="Rossmann-like_a/b/a_fold"/>
</dbReference>
<dbReference type="InterPro" id="IPR009080">
    <property type="entry name" value="tRNAsynth_Ia_anticodon-bd"/>
</dbReference>
<dbReference type="InterPro" id="IPR009008">
    <property type="entry name" value="Val/Leu/Ile-tRNA-synth_edit"/>
</dbReference>
<dbReference type="NCBIfam" id="TIGR00396">
    <property type="entry name" value="leuS_bact"/>
    <property type="match status" value="1"/>
</dbReference>
<dbReference type="PANTHER" id="PTHR43740:SF2">
    <property type="entry name" value="LEUCINE--TRNA LIGASE, MITOCHONDRIAL"/>
    <property type="match status" value="1"/>
</dbReference>
<dbReference type="PANTHER" id="PTHR43740">
    <property type="entry name" value="LEUCYL-TRNA SYNTHETASE"/>
    <property type="match status" value="1"/>
</dbReference>
<dbReference type="Pfam" id="PF08264">
    <property type="entry name" value="Anticodon_1"/>
    <property type="match status" value="1"/>
</dbReference>
<dbReference type="Pfam" id="PF00133">
    <property type="entry name" value="tRNA-synt_1"/>
    <property type="match status" value="1"/>
</dbReference>
<dbReference type="Pfam" id="PF13603">
    <property type="entry name" value="tRNA-synt_1_2"/>
    <property type="match status" value="1"/>
</dbReference>
<dbReference type="Pfam" id="PF09334">
    <property type="entry name" value="tRNA-synt_1g"/>
    <property type="match status" value="1"/>
</dbReference>
<dbReference type="PRINTS" id="PR00985">
    <property type="entry name" value="TRNASYNTHLEU"/>
</dbReference>
<dbReference type="SUPFAM" id="SSF47323">
    <property type="entry name" value="Anticodon-binding domain of a subclass of class I aminoacyl-tRNA synthetases"/>
    <property type="match status" value="1"/>
</dbReference>
<dbReference type="SUPFAM" id="SSF52374">
    <property type="entry name" value="Nucleotidylyl transferase"/>
    <property type="match status" value="1"/>
</dbReference>
<dbReference type="SUPFAM" id="SSF50677">
    <property type="entry name" value="ValRS/IleRS/LeuRS editing domain"/>
    <property type="match status" value="1"/>
</dbReference>
<dbReference type="PROSITE" id="PS00178">
    <property type="entry name" value="AA_TRNA_LIGASE_I"/>
    <property type="match status" value="1"/>
</dbReference>
<comment type="catalytic activity">
    <reaction evidence="1">
        <text>tRNA(Leu) + L-leucine + ATP = L-leucyl-tRNA(Leu) + AMP + diphosphate</text>
        <dbReference type="Rhea" id="RHEA:11688"/>
        <dbReference type="Rhea" id="RHEA-COMP:9613"/>
        <dbReference type="Rhea" id="RHEA-COMP:9622"/>
        <dbReference type="ChEBI" id="CHEBI:30616"/>
        <dbReference type="ChEBI" id="CHEBI:33019"/>
        <dbReference type="ChEBI" id="CHEBI:57427"/>
        <dbReference type="ChEBI" id="CHEBI:78442"/>
        <dbReference type="ChEBI" id="CHEBI:78494"/>
        <dbReference type="ChEBI" id="CHEBI:456215"/>
        <dbReference type="EC" id="6.1.1.4"/>
    </reaction>
</comment>
<comment type="subcellular location">
    <subcellularLocation>
        <location evidence="1">Cytoplasm</location>
    </subcellularLocation>
</comment>
<comment type="similarity">
    <text evidence="1">Belongs to the class-I aminoacyl-tRNA synthetase family.</text>
</comment>
<organism>
    <name type="scientific">Francisella tularensis subsp. tularensis (strain SCHU S4 / Schu 4)</name>
    <dbReference type="NCBI Taxonomy" id="177416"/>
    <lineage>
        <taxon>Bacteria</taxon>
        <taxon>Pseudomonadati</taxon>
        <taxon>Pseudomonadota</taxon>
        <taxon>Gammaproteobacteria</taxon>
        <taxon>Thiotrichales</taxon>
        <taxon>Francisellaceae</taxon>
        <taxon>Francisella</taxon>
    </lineage>
</organism>
<keyword id="KW-0030">Aminoacyl-tRNA synthetase</keyword>
<keyword id="KW-0067">ATP-binding</keyword>
<keyword id="KW-0963">Cytoplasm</keyword>
<keyword id="KW-0436">Ligase</keyword>
<keyword id="KW-0547">Nucleotide-binding</keyword>
<keyword id="KW-0648">Protein biosynthesis</keyword>
<keyword id="KW-1185">Reference proteome</keyword>
<name>SYL_FRATT</name>